<gene>
    <name evidence="1" type="primary">lpxK</name>
    <name type="ordered locus">Pnuc_0284</name>
</gene>
<name>LPXK_POLAQ</name>
<feature type="chain" id="PRO_0000340847" description="Tetraacyldisaccharide 4'-kinase">
    <location>
        <begin position="1"/>
        <end position="363"/>
    </location>
</feature>
<feature type="binding site" evidence="1">
    <location>
        <begin position="62"/>
        <end position="69"/>
    </location>
    <ligand>
        <name>ATP</name>
        <dbReference type="ChEBI" id="CHEBI:30616"/>
    </ligand>
</feature>
<protein>
    <recommendedName>
        <fullName evidence="1">Tetraacyldisaccharide 4'-kinase</fullName>
        <ecNumber evidence="1">2.7.1.130</ecNumber>
    </recommendedName>
    <alternativeName>
        <fullName evidence="1">Lipid A 4'-kinase</fullName>
    </alternativeName>
</protein>
<keyword id="KW-0067">ATP-binding</keyword>
<keyword id="KW-0418">Kinase</keyword>
<keyword id="KW-0441">Lipid A biosynthesis</keyword>
<keyword id="KW-0444">Lipid biosynthesis</keyword>
<keyword id="KW-0443">Lipid metabolism</keyword>
<keyword id="KW-0547">Nucleotide-binding</keyword>
<keyword id="KW-1185">Reference proteome</keyword>
<keyword id="KW-0808">Transferase</keyword>
<proteinExistence type="inferred from homology"/>
<comment type="function">
    <text evidence="1">Transfers the gamma-phosphate of ATP to the 4'-position of a tetraacyldisaccharide 1-phosphate intermediate (termed DS-1-P) to form tetraacyldisaccharide 1,4'-bis-phosphate (lipid IVA).</text>
</comment>
<comment type="catalytic activity">
    <reaction evidence="1">
        <text>a lipid A disaccharide + ATP = a lipid IVA + ADP + H(+)</text>
        <dbReference type="Rhea" id="RHEA:67840"/>
        <dbReference type="ChEBI" id="CHEBI:15378"/>
        <dbReference type="ChEBI" id="CHEBI:30616"/>
        <dbReference type="ChEBI" id="CHEBI:176343"/>
        <dbReference type="ChEBI" id="CHEBI:176425"/>
        <dbReference type="ChEBI" id="CHEBI:456216"/>
        <dbReference type="EC" id="2.7.1.130"/>
    </reaction>
</comment>
<comment type="pathway">
    <text evidence="1">Glycolipid biosynthesis; lipid IV(A) biosynthesis; lipid IV(A) from (3R)-3-hydroxytetradecanoyl-[acyl-carrier-protein] and UDP-N-acetyl-alpha-D-glucosamine: step 6/6.</text>
</comment>
<comment type="similarity">
    <text evidence="1">Belongs to the LpxK family.</text>
</comment>
<evidence type="ECO:0000255" key="1">
    <source>
        <dbReference type="HAMAP-Rule" id="MF_00409"/>
    </source>
</evidence>
<organism>
    <name type="scientific">Polynucleobacter asymbioticus (strain DSM 18221 / CIP 109841 / QLW-P1DMWA-1)</name>
    <name type="common">Polynucleobacter necessarius subsp. asymbioticus</name>
    <dbReference type="NCBI Taxonomy" id="312153"/>
    <lineage>
        <taxon>Bacteria</taxon>
        <taxon>Pseudomonadati</taxon>
        <taxon>Pseudomonadota</taxon>
        <taxon>Betaproteobacteria</taxon>
        <taxon>Burkholderiales</taxon>
        <taxon>Burkholderiaceae</taxon>
        <taxon>Polynucleobacter</taxon>
    </lineage>
</organism>
<sequence length="363" mass="40906">MSFSLFRKAPKFWERRGPTSLLLWPLSWLYGLILRARKLIHDLGIVRTKPTPVPIIIVGNIRVGGTGKTPIVIALAKRLSQLGWKPGIISRGYGSSSQTAPLLVRSDSSPSLVGDEPVLIAKRTDNQFPIWVYPKRQQSIQALLKHSPEVDVIISDDGLQHRGLTRWPAREGGRDIEFVVRDSRGEGNRFLLPAGPLREPATRDRDATLFTGNPSFNEKKTGILDEYFLGRRAFSLGTYLGRPYQLIDHANTQSLEQIAEQFLPKSMTAIAGLGNPQRFFDDLAKQGVTCKQIPLPDHAQYTPEFFAKVKAQCLLITEKDAVKCAEISDERIWVVPMSLHLPENFVEWLQSILQRPDPHRYTL</sequence>
<dbReference type="EC" id="2.7.1.130" evidence="1"/>
<dbReference type="EMBL" id="CP000655">
    <property type="protein sequence ID" value="ABP33505.1"/>
    <property type="molecule type" value="Genomic_DNA"/>
</dbReference>
<dbReference type="RefSeq" id="WP_011902130.1">
    <property type="nucleotide sequence ID" value="NC_009379.1"/>
</dbReference>
<dbReference type="SMR" id="A4SVJ1"/>
<dbReference type="GeneID" id="31480634"/>
<dbReference type="KEGG" id="pnu:Pnuc_0284"/>
<dbReference type="eggNOG" id="COG1663">
    <property type="taxonomic scope" value="Bacteria"/>
</dbReference>
<dbReference type="HOGENOM" id="CLU_038816_2_0_4"/>
<dbReference type="UniPathway" id="UPA00359">
    <property type="reaction ID" value="UER00482"/>
</dbReference>
<dbReference type="Proteomes" id="UP000000231">
    <property type="component" value="Chromosome"/>
</dbReference>
<dbReference type="GO" id="GO:0005886">
    <property type="term" value="C:plasma membrane"/>
    <property type="evidence" value="ECO:0007669"/>
    <property type="project" value="TreeGrafter"/>
</dbReference>
<dbReference type="GO" id="GO:0005524">
    <property type="term" value="F:ATP binding"/>
    <property type="evidence" value="ECO:0007669"/>
    <property type="project" value="UniProtKB-UniRule"/>
</dbReference>
<dbReference type="GO" id="GO:0009029">
    <property type="term" value="F:tetraacyldisaccharide 4'-kinase activity"/>
    <property type="evidence" value="ECO:0007669"/>
    <property type="project" value="UniProtKB-UniRule"/>
</dbReference>
<dbReference type="GO" id="GO:0009245">
    <property type="term" value="P:lipid A biosynthetic process"/>
    <property type="evidence" value="ECO:0007669"/>
    <property type="project" value="UniProtKB-UniRule"/>
</dbReference>
<dbReference type="GO" id="GO:0009244">
    <property type="term" value="P:lipopolysaccharide core region biosynthetic process"/>
    <property type="evidence" value="ECO:0007669"/>
    <property type="project" value="TreeGrafter"/>
</dbReference>
<dbReference type="HAMAP" id="MF_00409">
    <property type="entry name" value="LpxK"/>
    <property type="match status" value="1"/>
</dbReference>
<dbReference type="InterPro" id="IPR003758">
    <property type="entry name" value="LpxK"/>
</dbReference>
<dbReference type="InterPro" id="IPR027417">
    <property type="entry name" value="P-loop_NTPase"/>
</dbReference>
<dbReference type="NCBIfam" id="TIGR00682">
    <property type="entry name" value="lpxK"/>
    <property type="match status" value="1"/>
</dbReference>
<dbReference type="PANTHER" id="PTHR42724">
    <property type="entry name" value="TETRAACYLDISACCHARIDE 4'-KINASE"/>
    <property type="match status" value="1"/>
</dbReference>
<dbReference type="PANTHER" id="PTHR42724:SF1">
    <property type="entry name" value="TETRAACYLDISACCHARIDE 4'-KINASE, MITOCHONDRIAL-RELATED"/>
    <property type="match status" value="1"/>
</dbReference>
<dbReference type="Pfam" id="PF02606">
    <property type="entry name" value="LpxK"/>
    <property type="match status" value="1"/>
</dbReference>
<dbReference type="SUPFAM" id="SSF52540">
    <property type="entry name" value="P-loop containing nucleoside triphosphate hydrolases"/>
    <property type="match status" value="1"/>
</dbReference>
<accession>A4SVJ1</accession>
<reference key="1">
    <citation type="journal article" date="2012" name="Stand. Genomic Sci.">
        <title>Complete genome sequence of Polynucleobacter necessarius subsp. asymbioticus type strain (QLW-P1DMWA-1(T)).</title>
        <authorList>
            <person name="Meincke L."/>
            <person name="Copeland A."/>
            <person name="Lapidus A."/>
            <person name="Lucas S."/>
            <person name="Berry K.W."/>
            <person name="Del Rio T.G."/>
            <person name="Hammon N."/>
            <person name="Dalin E."/>
            <person name="Tice H."/>
            <person name="Pitluck S."/>
            <person name="Richardson P."/>
            <person name="Bruce D."/>
            <person name="Goodwin L."/>
            <person name="Han C."/>
            <person name="Tapia R."/>
            <person name="Detter J.C."/>
            <person name="Schmutz J."/>
            <person name="Brettin T."/>
            <person name="Larimer F."/>
            <person name="Land M."/>
            <person name="Hauser L."/>
            <person name="Kyrpides N.C."/>
            <person name="Ivanova N."/>
            <person name="Goker M."/>
            <person name="Woyke T."/>
            <person name="Wu Q.L."/>
            <person name="Pockl M."/>
            <person name="Hahn M.W."/>
            <person name="Klenk H.P."/>
        </authorList>
    </citation>
    <scope>NUCLEOTIDE SEQUENCE [LARGE SCALE GENOMIC DNA]</scope>
    <source>
        <strain>DSM 18221 / CIP 109841 / QLW-P1DMWA-1</strain>
    </source>
</reference>